<name>CLPX_EHRRW</name>
<keyword id="KW-0067">ATP-binding</keyword>
<keyword id="KW-0143">Chaperone</keyword>
<keyword id="KW-0479">Metal-binding</keyword>
<keyword id="KW-0547">Nucleotide-binding</keyword>
<keyword id="KW-0862">Zinc</keyword>
<reference key="1">
    <citation type="journal article" date="2005" name="Proc. Natl. Acad. Sci. U.S.A.">
        <title>The genome of the heartwater agent Ehrlichia ruminantium contains multiple tandem repeats of actively variable copy number.</title>
        <authorList>
            <person name="Collins N.E."/>
            <person name="Liebenberg J."/>
            <person name="de Villiers E.P."/>
            <person name="Brayton K.A."/>
            <person name="Louw E."/>
            <person name="Pretorius A."/>
            <person name="Faber F.E."/>
            <person name="van Heerden H."/>
            <person name="Josemans A."/>
            <person name="van Kleef M."/>
            <person name="Steyn H.C."/>
            <person name="van Strijp M.F."/>
            <person name="Zweygarth E."/>
            <person name="Jongejan F."/>
            <person name="Maillard J.C."/>
            <person name="Berthier D."/>
            <person name="Botha M."/>
            <person name="Joubert F."/>
            <person name="Corton C.H."/>
            <person name="Thomson N.R."/>
            <person name="Allsopp M.T."/>
            <person name="Allsopp B.A."/>
        </authorList>
    </citation>
    <scope>NUCLEOTIDE SEQUENCE [LARGE SCALE GENOMIC DNA]</scope>
    <source>
        <strain>Welgevonden</strain>
    </source>
</reference>
<reference key="2">
    <citation type="journal article" date="2006" name="J. Bacteriol.">
        <title>Comparative genomic analysis of three strains of Ehrlichia ruminantium reveals an active process of genome size plasticity.</title>
        <authorList>
            <person name="Frutos R."/>
            <person name="Viari A."/>
            <person name="Ferraz C."/>
            <person name="Morgat A."/>
            <person name="Eychenie S."/>
            <person name="Kandassamy Y."/>
            <person name="Chantal I."/>
            <person name="Bensaid A."/>
            <person name="Coissac E."/>
            <person name="Vachiery N."/>
            <person name="Demaille J."/>
            <person name="Martinez D."/>
        </authorList>
    </citation>
    <scope>NUCLEOTIDE SEQUENCE [LARGE SCALE GENOMIC DNA]</scope>
    <source>
        <strain>Welgevonden</strain>
    </source>
</reference>
<protein>
    <recommendedName>
        <fullName evidence="1">ATP-dependent Clp protease ATP-binding subunit ClpX</fullName>
    </recommendedName>
</protein>
<sequence>MADNDKNSCSCSFCGKVHSEVRKLIAGPSVFICNECIDLCSGILQEEGSSYKKGDTLDLKPKEIKKVLDEYVIGQEHSKKVLSVAVYNHYKRLSNSGIISDVEISKSNVLLIGPTGSGKTLLARTLARVLQVPFAMADATTLTEAGYVGEDVESILLKLLQAANFNVEAAQRGIIYIDEVDKISRKSENASITRDVSGEGVQQALLKVIEGTVSSVPPQGGRKHPHQEFIQINTDNILFIFGGAFDGLEKIIESRHQGSNMGFEANVQKASKDKDIFCYTEPEDLVKFGLIPEFVGRIPVITSLGELDEATLCRILVEPKNSLVKQYKKLFEMDNINLEFDDSALSEIARKAAVRKAGARGLRAILENLLLDLMFETPGTFNVDQIVISKQMVEESMVNSRLFLKH</sequence>
<organism>
    <name type="scientific">Ehrlichia ruminantium (strain Welgevonden)</name>
    <dbReference type="NCBI Taxonomy" id="254945"/>
    <lineage>
        <taxon>Bacteria</taxon>
        <taxon>Pseudomonadati</taxon>
        <taxon>Pseudomonadota</taxon>
        <taxon>Alphaproteobacteria</taxon>
        <taxon>Rickettsiales</taxon>
        <taxon>Anaplasmataceae</taxon>
        <taxon>Ehrlichia</taxon>
    </lineage>
</organism>
<evidence type="ECO:0000255" key="1">
    <source>
        <dbReference type="HAMAP-Rule" id="MF_00175"/>
    </source>
</evidence>
<evidence type="ECO:0000255" key="2">
    <source>
        <dbReference type="PROSITE-ProRule" id="PRU01250"/>
    </source>
</evidence>
<accession>Q5HBX4</accession>
<accession>Q5FD02</accession>
<gene>
    <name evidence="1" type="primary">clpX</name>
    <name type="ordered locus">Erum2010</name>
    <name type="ordered locus">ERWE_CDS_02030</name>
</gene>
<comment type="function">
    <text evidence="1">ATP-dependent specificity component of the Clp protease. It directs the protease to specific substrates. Can perform chaperone functions in the absence of ClpP.</text>
</comment>
<comment type="subunit">
    <text evidence="1">Component of the ClpX-ClpP complex. Forms a hexameric ring that, in the presence of ATP, binds to fourteen ClpP subunits assembled into a disk-like structure with a central cavity, resembling the structure of eukaryotic proteasomes.</text>
</comment>
<comment type="similarity">
    <text evidence="1">Belongs to the ClpX chaperone family.</text>
</comment>
<proteinExistence type="inferred from homology"/>
<feature type="chain" id="PRO_1000024556" description="ATP-dependent Clp protease ATP-binding subunit ClpX">
    <location>
        <begin position="1"/>
        <end position="406"/>
    </location>
</feature>
<feature type="domain" description="ClpX-type ZB" evidence="2">
    <location>
        <begin position="1"/>
        <end position="52"/>
    </location>
</feature>
<feature type="binding site" evidence="2">
    <location>
        <position position="11"/>
    </location>
    <ligand>
        <name>Zn(2+)</name>
        <dbReference type="ChEBI" id="CHEBI:29105"/>
    </ligand>
</feature>
<feature type="binding site" evidence="2">
    <location>
        <position position="14"/>
    </location>
    <ligand>
        <name>Zn(2+)</name>
        <dbReference type="ChEBI" id="CHEBI:29105"/>
    </ligand>
</feature>
<feature type="binding site" evidence="2">
    <location>
        <position position="33"/>
    </location>
    <ligand>
        <name>Zn(2+)</name>
        <dbReference type="ChEBI" id="CHEBI:29105"/>
    </ligand>
</feature>
<feature type="binding site" evidence="2">
    <location>
        <position position="36"/>
    </location>
    <ligand>
        <name>Zn(2+)</name>
        <dbReference type="ChEBI" id="CHEBI:29105"/>
    </ligand>
</feature>
<feature type="binding site" evidence="1">
    <location>
        <begin position="114"/>
        <end position="121"/>
    </location>
    <ligand>
        <name>ATP</name>
        <dbReference type="ChEBI" id="CHEBI:30616"/>
    </ligand>
</feature>
<dbReference type="EMBL" id="CR767821">
    <property type="protein sequence ID" value="CAH57919.1"/>
    <property type="molecule type" value="Genomic_DNA"/>
</dbReference>
<dbReference type="EMBL" id="CR925678">
    <property type="protein sequence ID" value="CAI26697.1"/>
    <property type="molecule type" value="Genomic_DNA"/>
</dbReference>
<dbReference type="RefSeq" id="WP_011154887.1">
    <property type="nucleotide sequence ID" value="NC_005295.2"/>
</dbReference>
<dbReference type="SMR" id="Q5HBX4"/>
<dbReference type="GeneID" id="33057721"/>
<dbReference type="KEGG" id="eru:Erum2010"/>
<dbReference type="KEGG" id="erw:ERWE_CDS_02030"/>
<dbReference type="eggNOG" id="COG1219">
    <property type="taxonomic scope" value="Bacteria"/>
</dbReference>
<dbReference type="HOGENOM" id="CLU_014218_8_2_5"/>
<dbReference type="Proteomes" id="UP000001021">
    <property type="component" value="Chromosome"/>
</dbReference>
<dbReference type="GO" id="GO:0009376">
    <property type="term" value="C:HslUV protease complex"/>
    <property type="evidence" value="ECO:0007669"/>
    <property type="project" value="TreeGrafter"/>
</dbReference>
<dbReference type="GO" id="GO:0005524">
    <property type="term" value="F:ATP binding"/>
    <property type="evidence" value="ECO:0007669"/>
    <property type="project" value="UniProtKB-UniRule"/>
</dbReference>
<dbReference type="GO" id="GO:0016887">
    <property type="term" value="F:ATP hydrolysis activity"/>
    <property type="evidence" value="ECO:0007669"/>
    <property type="project" value="InterPro"/>
</dbReference>
<dbReference type="GO" id="GO:0140662">
    <property type="term" value="F:ATP-dependent protein folding chaperone"/>
    <property type="evidence" value="ECO:0007669"/>
    <property type="project" value="InterPro"/>
</dbReference>
<dbReference type="GO" id="GO:0046983">
    <property type="term" value="F:protein dimerization activity"/>
    <property type="evidence" value="ECO:0007669"/>
    <property type="project" value="InterPro"/>
</dbReference>
<dbReference type="GO" id="GO:0051082">
    <property type="term" value="F:unfolded protein binding"/>
    <property type="evidence" value="ECO:0007669"/>
    <property type="project" value="UniProtKB-UniRule"/>
</dbReference>
<dbReference type="GO" id="GO:0008270">
    <property type="term" value="F:zinc ion binding"/>
    <property type="evidence" value="ECO:0007669"/>
    <property type="project" value="InterPro"/>
</dbReference>
<dbReference type="GO" id="GO:0051301">
    <property type="term" value="P:cell division"/>
    <property type="evidence" value="ECO:0007669"/>
    <property type="project" value="TreeGrafter"/>
</dbReference>
<dbReference type="GO" id="GO:0051603">
    <property type="term" value="P:proteolysis involved in protein catabolic process"/>
    <property type="evidence" value="ECO:0007669"/>
    <property type="project" value="TreeGrafter"/>
</dbReference>
<dbReference type="CDD" id="cd19497">
    <property type="entry name" value="RecA-like_ClpX"/>
    <property type="match status" value="1"/>
</dbReference>
<dbReference type="FunFam" id="1.10.8.60:FF:000002">
    <property type="entry name" value="ATP-dependent Clp protease ATP-binding subunit ClpX"/>
    <property type="match status" value="1"/>
</dbReference>
<dbReference type="FunFam" id="3.40.50.300:FF:000005">
    <property type="entry name" value="ATP-dependent Clp protease ATP-binding subunit ClpX"/>
    <property type="match status" value="1"/>
</dbReference>
<dbReference type="Gene3D" id="1.10.8.60">
    <property type="match status" value="1"/>
</dbReference>
<dbReference type="Gene3D" id="6.20.220.10">
    <property type="entry name" value="ClpX chaperone, C4-type zinc finger domain"/>
    <property type="match status" value="1"/>
</dbReference>
<dbReference type="Gene3D" id="3.40.50.300">
    <property type="entry name" value="P-loop containing nucleotide triphosphate hydrolases"/>
    <property type="match status" value="1"/>
</dbReference>
<dbReference type="HAMAP" id="MF_00175">
    <property type="entry name" value="ClpX"/>
    <property type="match status" value="1"/>
</dbReference>
<dbReference type="InterPro" id="IPR003593">
    <property type="entry name" value="AAA+_ATPase"/>
</dbReference>
<dbReference type="InterPro" id="IPR050052">
    <property type="entry name" value="ATP-dep_Clp_protease_ClpX"/>
</dbReference>
<dbReference type="InterPro" id="IPR003959">
    <property type="entry name" value="ATPase_AAA_core"/>
</dbReference>
<dbReference type="InterPro" id="IPR019489">
    <property type="entry name" value="Clp_ATPase_C"/>
</dbReference>
<dbReference type="InterPro" id="IPR004487">
    <property type="entry name" value="Clp_protease_ATP-bd_su_ClpX"/>
</dbReference>
<dbReference type="InterPro" id="IPR046425">
    <property type="entry name" value="ClpX_bact"/>
</dbReference>
<dbReference type="InterPro" id="IPR027417">
    <property type="entry name" value="P-loop_NTPase"/>
</dbReference>
<dbReference type="InterPro" id="IPR010603">
    <property type="entry name" value="Znf_CppX_C4"/>
</dbReference>
<dbReference type="InterPro" id="IPR038366">
    <property type="entry name" value="Znf_CppX_C4_sf"/>
</dbReference>
<dbReference type="NCBIfam" id="TIGR00382">
    <property type="entry name" value="clpX"/>
    <property type="match status" value="1"/>
</dbReference>
<dbReference type="NCBIfam" id="NF003745">
    <property type="entry name" value="PRK05342.1"/>
    <property type="match status" value="1"/>
</dbReference>
<dbReference type="PANTHER" id="PTHR48102:SF7">
    <property type="entry name" value="ATP-DEPENDENT CLP PROTEASE ATP-BINDING SUBUNIT CLPX-LIKE, MITOCHONDRIAL"/>
    <property type="match status" value="1"/>
</dbReference>
<dbReference type="PANTHER" id="PTHR48102">
    <property type="entry name" value="ATP-DEPENDENT CLP PROTEASE ATP-BINDING SUBUNIT CLPX-LIKE, MITOCHONDRIAL-RELATED"/>
    <property type="match status" value="1"/>
</dbReference>
<dbReference type="Pfam" id="PF07724">
    <property type="entry name" value="AAA_2"/>
    <property type="match status" value="1"/>
</dbReference>
<dbReference type="Pfam" id="PF10431">
    <property type="entry name" value="ClpB_D2-small"/>
    <property type="match status" value="1"/>
</dbReference>
<dbReference type="Pfam" id="PF06689">
    <property type="entry name" value="zf-C4_ClpX"/>
    <property type="match status" value="1"/>
</dbReference>
<dbReference type="SMART" id="SM00382">
    <property type="entry name" value="AAA"/>
    <property type="match status" value="1"/>
</dbReference>
<dbReference type="SMART" id="SM01086">
    <property type="entry name" value="ClpB_D2-small"/>
    <property type="match status" value="1"/>
</dbReference>
<dbReference type="SMART" id="SM00994">
    <property type="entry name" value="zf-C4_ClpX"/>
    <property type="match status" value="1"/>
</dbReference>
<dbReference type="SUPFAM" id="SSF57716">
    <property type="entry name" value="Glucocorticoid receptor-like (DNA-binding domain)"/>
    <property type="match status" value="1"/>
</dbReference>
<dbReference type="SUPFAM" id="SSF52540">
    <property type="entry name" value="P-loop containing nucleoside triphosphate hydrolases"/>
    <property type="match status" value="1"/>
</dbReference>
<dbReference type="PROSITE" id="PS51902">
    <property type="entry name" value="CLPX_ZB"/>
    <property type="match status" value="1"/>
</dbReference>